<keyword id="KW-0106">Calcium</keyword>
<keyword id="KW-0449">Lipoprotein</keyword>
<keyword id="KW-0479">Metal-binding</keyword>
<keyword id="KW-0519">Myristate</keyword>
<keyword id="KW-1185">Reference proteome</keyword>
<keyword id="KW-0677">Repeat</keyword>
<dbReference type="EMBL" id="BC167579">
    <property type="protein sequence ID" value="AAI67579.1"/>
    <property type="molecule type" value="mRNA"/>
</dbReference>
<dbReference type="RefSeq" id="NP_001123413.1">
    <property type="nucleotide sequence ID" value="NM_001129941.1"/>
</dbReference>
<dbReference type="SMR" id="B3DLU1"/>
<dbReference type="FunCoup" id="B3DLU1">
    <property type="interactions" value="481"/>
</dbReference>
<dbReference type="STRING" id="8364.ENSXETP00000015789"/>
<dbReference type="PaxDb" id="8364-ENSXETP00000014533"/>
<dbReference type="GeneID" id="100170190"/>
<dbReference type="KEGG" id="xtr:100170190"/>
<dbReference type="AGR" id="Xenbase:XB-GENE-948387"/>
<dbReference type="CTD" id="83988"/>
<dbReference type="Xenbase" id="XB-GENE-948387">
    <property type="gene designation" value="ncald"/>
</dbReference>
<dbReference type="eggNOG" id="KOG0044">
    <property type="taxonomic scope" value="Eukaryota"/>
</dbReference>
<dbReference type="HOGENOM" id="CLU_072366_1_0_1"/>
<dbReference type="InParanoid" id="B3DLU1"/>
<dbReference type="OMA" id="MGCVCMK"/>
<dbReference type="OrthoDB" id="191686at2759"/>
<dbReference type="PhylomeDB" id="B3DLU1"/>
<dbReference type="TreeFam" id="TF300009"/>
<dbReference type="Proteomes" id="UP000008143">
    <property type="component" value="Chromosome 6"/>
</dbReference>
<dbReference type="Bgee" id="ENSXETG00000006631">
    <property type="expression patterns" value="Expressed in brain and 17 other cell types or tissues"/>
</dbReference>
<dbReference type="GO" id="GO:0005509">
    <property type="term" value="F:calcium ion binding"/>
    <property type="evidence" value="ECO:0007669"/>
    <property type="project" value="InterPro"/>
</dbReference>
<dbReference type="CDD" id="cd00051">
    <property type="entry name" value="EFh"/>
    <property type="match status" value="2"/>
</dbReference>
<dbReference type="FunFam" id="1.10.238.10:FF:000009">
    <property type="entry name" value="Visinin-like protein 1"/>
    <property type="match status" value="1"/>
</dbReference>
<dbReference type="Gene3D" id="1.10.238.10">
    <property type="entry name" value="EF-hand"/>
    <property type="match status" value="1"/>
</dbReference>
<dbReference type="InterPro" id="IPR011992">
    <property type="entry name" value="EF-hand-dom_pair"/>
</dbReference>
<dbReference type="InterPro" id="IPR018247">
    <property type="entry name" value="EF_Hand_1_Ca_BS"/>
</dbReference>
<dbReference type="InterPro" id="IPR002048">
    <property type="entry name" value="EF_hand_dom"/>
</dbReference>
<dbReference type="InterPro" id="IPR028846">
    <property type="entry name" value="Recoverin"/>
</dbReference>
<dbReference type="PANTHER" id="PTHR23055">
    <property type="entry name" value="CALCIUM BINDING PROTEINS"/>
    <property type="match status" value="1"/>
</dbReference>
<dbReference type="PANTHER" id="PTHR23055:SF87">
    <property type="entry name" value="NEUROCALCIN-DELTA"/>
    <property type="match status" value="1"/>
</dbReference>
<dbReference type="Pfam" id="PF00036">
    <property type="entry name" value="EF-hand_1"/>
    <property type="match status" value="1"/>
</dbReference>
<dbReference type="Pfam" id="PF13499">
    <property type="entry name" value="EF-hand_7"/>
    <property type="match status" value="1"/>
</dbReference>
<dbReference type="PRINTS" id="PR00450">
    <property type="entry name" value="RECOVERIN"/>
</dbReference>
<dbReference type="SMART" id="SM00054">
    <property type="entry name" value="EFh"/>
    <property type="match status" value="3"/>
</dbReference>
<dbReference type="SUPFAM" id="SSF47473">
    <property type="entry name" value="EF-hand"/>
    <property type="match status" value="1"/>
</dbReference>
<dbReference type="PROSITE" id="PS00018">
    <property type="entry name" value="EF_HAND_1"/>
    <property type="match status" value="3"/>
</dbReference>
<dbReference type="PROSITE" id="PS50222">
    <property type="entry name" value="EF_HAND_2"/>
    <property type="match status" value="4"/>
</dbReference>
<comment type="function">
    <text evidence="1">May be involved in the calcium-dependent regulation of rhodopsin phosphorylation. Binds three calcium ions (By similarity).</text>
</comment>
<comment type="similarity">
    <text evidence="4">Belongs to the recoverin family.</text>
</comment>
<accession>B3DLU1</accession>
<proteinExistence type="evidence at transcript level"/>
<gene>
    <name type="primary">ncald</name>
</gene>
<organism>
    <name type="scientific">Xenopus tropicalis</name>
    <name type="common">Western clawed frog</name>
    <name type="synonym">Silurana tropicalis</name>
    <dbReference type="NCBI Taxonomy" id="8364"/>
    <lineage>
        <taxon>Eukaryota</taxon>
        <taxon>Metazoa</taxon>
        <taxon>Chordata</taxon>
        <taxon>Craniata</taxon>
        <taxon>Vertebrata</taxon>
        <taxon>Euteleostomi</taxon>
        <taxon>Amphibia</taxon>
        <taxon>Batrachia</taxon>
        <taxon>Anura</taxon>
        <taxon>Pipoidea</taxon>
        <taxon>Pipidae</taxon>
        <taxon>Xenopodinae</taxon>
        <taxon>Xenopus</taxon>
        <taxon>Silurana</taxon>
    </lineage>
</organism>
<protein>
    <recommendedName>
        <fullName>Neurocalcin-delta</fullName>
    </recommendedName>
</protein>
<feature type="initiator methionine" description="Removed" evidence="2">
    <location>
        <position position="1"/>
    </location>
</feature>
<feature type="chain" id="PRO_0000362083" description="Neurocalcin-delta">
    <location>
        <begin position="2"/>
        <end position="193"/>
    </location>
</feature>
<feature type="domain" description="EF-hand 1" evidence="3">
    <location>
        <begin position="40"/>
        <end position="58"/>
    </location>
</feature>
<feature type="domain" description="EF-hand 2" evidence="3">
    <location>
        <begin position="60"/>
        <end position="95"/>
    </location>
</feature>
<feature type="domain" description="EF-hand 3" evidence="3">
    <location>
        <begin position="96"/>
        <end position="131"/>
    </location>
</feature>
<feature type="domain" description="EF-hand 4" evidence="3">
    <location>
        <begin position="144"/>
        <end position="179"/>
    </location>
</feature>
<feature type="binding site" evidence="3">
    <location>
        <position position="73"/>
    </location>
    <ligand>
        <name>Ca(2+)</name>
        <dbReference type="ChEBI" id="CHEBI:29108"/>
        <label>1</label>
    </ligand>
</feature>
<feature type="binding site" evidence="3">
    <location>
        <position position="75"/>
    </location>
    <ligand>
        <name>Ca(2+)</name>
        <dbReference type="ChEBI" id="CHEBI:29108"/>
        <label>1</label>
    </ligand>
</feature>
<feature type="binding site" evidence="3">
    <location>
        <position position="77"/>
    </location>
    <ligand>
        <name>Ca(2+)</name>
        <dbReference type="ChEBI" id="CHEBI:29108"/>
        <label>1</label>
    </ligand>
</feature>
<feature type="binding site" evidence="3">
    <location>
        <position position="79"/>
    </location>
    <ligand>
        <name>Ca(2+)</name>
        <dbReference type="ChEBI" id="CHEBI:29108"/>
        <label>1</label>
    </ligand>
</feature>
<feature type="binding site" evidence="3">
    <location>
        <position position="84"/>
    </location>
    <ligand>
        <name>Ca(2+)</name>
        <dbReference type="ChEBI" id="CHEBI:29108"/>
        <label>1</label>
    </ligand>
</feature>
<feature type="binding site" evidence="3">
    <location>
        <position position="109"/>
    </location>
    <ligand>
        <name>Ca(2+)</name>
        <dbReference type="ChEBI" id="CHEBI:29108"/>
        <label>2</label>
    </ligand>
</feature>
<feature type="binding site" evidence="3">
    <location>
        <position position="111"/>
    </location>
    <ligand>
        <name>Ca(2+)</name>
        <dbReference type="ChEBI" id="CHEBI:29108"/>
        <label>2</label>
    </ligand>
</feature>
<feature type="binding site" evidence="3">
    <location>
        <position position="113"/>
    </location>
    <ligand>
        <name>Ca(2+)</name>
        <dbReference type="ChEBI" id="CHEBI:29108"/>
        <label>2</label>
    </ligand>
</feature>
<feature type="binding site" evidence="3">
    <location>
        <position position="115"/>
    </location>
    <ligand>
        <name>Ca(2+)</name>
        <dbReference type="ChEBI" id="CHEBI:29108"/>
        <label>2</label>
    </ligand>
</feature>
<feature type="binding site" evidence="3">
    <location>
        <position position="120"/>
    </location>
    <ligand>
        <name>Ca(2+)</name>
        <dbReference type="ChEBI" id="CHEBI:29108"/>
        <label>2</label>
    </ligand>
</feature>
<feature type="binding site" evidence="3">
    <location>
        <position position="157"/>
    </location>
    <ligand>
        <name>Ca(2+)</name>
        <dbReference type="ChEBI" id="CHEBI:29108"/>
        <label>3</label>
    </ligand>
</feature>
<feature type="binding site" evidence="3">
    <location>
        <position position="159"/>
    </location>
    <ligand>
        <name>Ca(2+)</name>
        <dbReference type="ChEBI" id="CHEBI:29108"/>
        <label>3</label>
    </ligand>
</feature>
<feature type="binding site" evidence="3">
    <location>
        <position position="161"/>
    </location>
    <ligand>
        <name>Ca(2+)</name>
        <dbReference type="ChEBI" id="CHEBI:29108"/>
        <label>3</label>
    </ligand>
</feature>
<feature type="binding site" evidence="3">
    <location>
        <position position="163"/>
    </location>
    <ligand>
        <name>Ca(2+)</name>
        <dbReference type="ChEBI" id="CHEBI:29108"/>
        <label>3</label>
    </ligand>
</feature>
<feature type="binding site" evidence="3">
    <location>
        <position position="168"/>
    </location>
    <ligand>
        <name>Ca(2+)</name>
        <dbReference type="ChEBI" id="CHEBI:29108"/>
        <label>3</label>
    </ligand>
</feature>
<feature type="lipid moiety-binding region" description="N-myristoyl glycine" evidence="2">
    <location>
        <position position="2"/>
    </location>
</feature>
<sequence>MGKQNSKLRPEVMQDLLESTDFTEHEIQEWYKGFLRDCPSGHLTMEEFKKIYGNFFPYGDASKFAEHVFRTFDANGDGTIDFREFIIALSVTSRGKLEQKLKWAFSMYDLDGNGYISKAEMLEIVQAIYKMVSSVMKMPEDESTPEKRTEKIFRQMDTNRDGKLSLEEFIRGAKSDPSIVRLLQCDPSSAGQF</sequence>
<reference key="1">
    <citation type="submission" date="2008-06" db="EMBL/GenBank/DDBJ databases">
        <authorList>
            <consortium name="NIH - Xenopus Gene Collection (XGC) project"/>
        </authorList>
    </citation>
    <scope>NUCLEOTIDE SEQUENCE [LARGE SCALE MRNA]</scope>
    <source>
        <tissue>Brain</tissue>
    </source>
</reference>
<evidence type="ECO:0000250" key="1"/>
<evidence type="ECO:0000255" key="2"/>
<evidence type="ECO:0000255" key="3">
    <source>
        <dbReference type="PROSITE-ProRule" id="PRU00448"/>
    </source>
</evidence>
<evidence type="ECO:0000305" key="4"/>
<name>NCALD_XENTR</name>